<keyword id="KW-0002">3D-structure</keyword>
<keyword id="KW-0010">Activator</keyword>
<keyword id="KW-0067">ATP-binding</keyword>
<keyword id="KW-0238">DNA-binding</keyword>
<keyword id="KW-0319">Glycerol metabolism</keyword>
<keyword id="KW-0547">Nucleotide-binding</keyword>
<keyword id="KW-1185">Reference proteome</keyword>
<keyword id="KW-0678">Repressor</keyword>
<keyword id="KW-0804">Transcription</keyword>
<keyword id="KW-0805">Transcription regulation</keyword>
<accession>P76016</accession>
<protein>
    <recommendedName>
        <fullName evidence="4">PTS-dependent dihydroxyacetone kinase operon regulatory protein</fullName>
    </recommendedName>
</protein>
<feature type="chain" id="PRO_0000081320" description="PTS-dependent dihydroxyacetone kinase operon regulatory protein">
    <location>
        <begin position="1"/>
        <end position="639"/>
    </location>
</feature>
<feature type="domain" description="GAF" evidence="5">
    <location>
        <begin position="52"/>
        <end position="189"/>
    </location>
</feature>
<feature type="domain" description="PAS" evidence="5">
    <location>
        <begin position="203"/>
        <end position="265"/>
    </location>
</feature>
<feature type="domain" description="Sigma-54 factor interaction" evidence="1">
    <location>
        <begin position="327"/>
        <end position="552"/>
    </location>
</feature>
<feature type="region of interest" description="Sensor domain" evidence="5">
    <location>
        <begin position="1"/>
        <end position="318"/>
    </location>
</feature>
<feature type="binding site" evidence="1">
    <location>
        <begin position="355"/>
        <end position="362"/>
    </location>
    <ligand>
        <name>ATP</name>
        <dbReference type="ChEBI" id="CHEBI:30616"/>
    </ligand>
</feature>
<feature type="binding site" evidence="1">
    <location>
        <begin position="415"/>
        <end position="424"/>
    </location>
    <ligand>
        <name>ATP</name>
        <dbReference type="ChEBI" id="CHEBI:30616"/>
    </ligand>
</feature>
<feature type="helix" evidence="7">
    <location>
        <begin position="14"/>
        <end position="26"/>
    </location>
</feature>
<feature type="helix" evidence="7">
    <location>
        <begin position="40"/>
        <end position="49"/>
    </location>
</feature>
<feature type="helix" evidence="7">
    <location>
        <begin position="51"/>
        <end position="66"/>
    </location>
</feature>
<feature type="strand" evidence="7">
    <location>
        <begin position="70"/>
        <end position="72"/>
    </location>
</feature>
<feature type="strand" evidence="7">
    <location>
        <begin position="74"/>
        <end position="79"/>
    </location>
</feature>
<feature type="strand" evidence="7">
    <location>
        <begin position="82"/>
        <end position="89"/>
    </location>
</feature>
<feature type="helix" evidence="7">
    <location>
        <begin position="91"/>
        <end position="99"/>
    </location>
</feature>
<feature type="helix" evidence="7">
    <location>
        <begin position="110"/>
        <end position="113"/>
    </location>
</feature>
<feature type="helix" evidence="7">
    <location>
        <begin position="117"/>
        <end position="124"/>
    </location>
</feature>
<feature type="strand" evidence="7">
    <location>
        <begin position="128"/>
        <end position="131"/>
    </location>
</feature>
<feature type="helix" evidence="7">
    <location>
        <begin position="132"/>
        <end position="134"/>
    </location>
</feature>
<feature type="strand" evidence="7">
    <location>
        <begin position="135"/>
        <end position="137"/>
    </location>
</feature>
<feature type="helix" evidence="7">
    <location>
        <begin position="138"/>
        <end position="140"/>
    </location>
</feature>
<feature type="strand" evidence="7">
    <location>
        <begin position="143"/>
        <end position="151"/>
    </location>
</feature>
<feature type="strand" evidence="6">
    <location>
        <begin position="153"/>
        <end position="155"/>
    </location>
</feature>
<feature type="strand" evidence="7">
    <location>
        <begin position="157"/>
        <end position="166"/>
    </location>
</feature>
<feature type="helix" evidence="7">
    <location>
        <begin position="167"/>
        <end position="169"/>
    </location>
</feature>
<feature type="helix" evidence="7">
    <location>
        <begin position="174"/>
        <end position="211"/>
    </location>
</feature>
<feature type="strand" evidence="7">
    <location>
        <begin position="212"/>
        <end position="219"/>
    </location>
</feature>
<feature type="strand" evidence="7">
    <location>
        <begin position="223"/>
        <end position="228"/>
    </location>
</feature>
<feature type="helix" evidence="7">
    <location>
        <begin position="230"/>
        <end position="235"/>
    </location>
</feature>
<feature type="turn" evidence="7">
    <location>
        <begin position="240"/>
        <end position="242"/>
    </location>
</feature>
<feature type="helix" evidence="7">
    <location>
        <begin position="248"/>
        <end position="251"/>
    </location>
</feature>
<feature type="helix" evidence="7">
    <location>
        <begin position="256"/>
        <end position="263"/>
    </location>
</feature>
<feature type="strand" evidence="7">
    <location>
        <begin position="268"/>
        <end position="276"/>
    </location>
</feature>
<feature type="strand" evidence="7">
    <location>
        <begin position="281"/>
        <end position="293"/>
    </location>
</feature>
<feature type="strand" evidence="7">
    <location>
        <begin position="296"/>
        <end position="304"/>
    </location>
</feature>
<comment type="function">
    <text evidence="2 3">Positively regulates the dhaKLM operon from a sigma-70 promoter. Represses its own expression.</text>
</comment>
<comment type="subunit">
    <text evidence="3">Homodimer. DhaR forms complexes with DhaK and DhaL-ADP.</text>
</comment>
<comment type="interaction">
    <interactant intactId="EBI-9153808">
        <id>P76016</id>
    </interactant>
    <interactant intactId="EBI-544485">
        <id>P76015</id>
        <label>dhaK</label>
    </interactant>
    <organismsDiffer>false</organismsDiffer>
    <experiments>4</experiments>
</comment>
<comment type="interaction">
    <interactant intactId="EBI-9153808">
        <id>P76016</id>
    </interactant>
    <interactant intactId="EBI-9021529">
        <id>P76014</id>
        <label>dhaL</label>
    </interactant>
    <organismsDiffer>false</organismsDiffer>
    <experiments>3</experiments>
</comment>
<comment type="induction">
    <text evidence="3">Represses its own expression. DhaL and DhaK act antagonistically as coactivator and corepressor of the transcription activator by mutually exclusive binding to the sensing domain of DhaR. In the presence of dihydroxyacetone, DhaK that binds dihydroxyacetone has less affinity for DhaR and is displaced by DhaL-ADP, which stimulates DhaR activity. In the absence of dihydroxyacetone, DhaL-ADP is converted by the PTS to DhaL-ATP, which does not bind to DhaR.</text>
</comment>
<proteinExistence type="evidence at protein level"/>
<sequence length="639" mass="70562">MSGAFNNDGRGISPLIATSWERCNKLMKRETWNVPHQAQGVTFASIYRRKKAMLTLGQAALEDAWEYMAPRECALFILDETACILSRNGDPQTLQQLSALGFNDGTYCAEGIIGTCALSLAAISGQAVKTMADQHFKQVLWNWAFCATPLFDSKGRLTGTIALACPVEQTTAADLPLTLAIAREVGNLLLTDSLLAETNRHLNQLNALLESMDDGVISWDEQGNLQFINAQAARVLRLDATASQGRAITELLTLPAVLQQAIKQAHPLKHVEATFESQHQFIDAVITLKPIIETQGTSFILLLHPVEQMRQLMTSQLGKVSHTFAHMPQDDPQTRRLIHFGRQAARSSFPVLLCGEEGVGKALLSQAIHNESERAAGPYIAVNCELYGDAALAEEFIGGDRTDNENGRLSRLELAHGGTLFLEKIEYLAVELQSALLQVIKQGVITRLDARRLIPIDVKVIATTTADLAMLVEQNRFSRQLYYALHAFEITIPPLRMRRGSIPALVNNKLRSLEKRFSTRLKIDDDALARLVSCAWPGNDFELYSVIENLALSSDNGRIRVSDLPEHLFTEQATDDVSATRLSTSLSFAEVEKEAIINAAQVTGGRIQEMSALLGIGRTTLWRKMKQHGIDAGQFKRRV</sequence>
<organism>
    <name type="scientific">Escherichia coli (strain K12)</name>
    <dbReference type="NCBI Taxonomy" id="83333"/>
    <lineage>
        <taxon>Bacteria</taxon>
        <taxon>Pseudomonadati</taxon>
        <taxon>Pseudomonadota</taxon>
        <taxon>Gammaproteobacteria</taxon>
        <taxon>Enterobacterales</taxon>
        <taxon>Enterobacteriaceae</taxon>
        <taxon>Escherichia</taxon>
    </lineage>
</organism>
<gene>
    <name evidence="4" type="primary">dhaR</name>
    <name type="synonym">ycgU</name>
    <name type="ordered locus">b1201</name>
    <name type="ordered locus">JW5188</name>
</gene>
<reference key="1">
    <citation type="journal article" date="1996" name="DNA Res.">
        <title>A 718-kb DNA sequence of the Escherichia coli K-12 genome corresponding to the 12.7-28.0 min region on the linkage map.</title>
        <authorList>
            <person name="Oshima T."/>
            <person name="Aiba H."/>
            <person name="Baba T."/>
            <person name="Fujita K."/>
            <person name="Hayashi K."/>
            <person name="Honjo A."/>
            <person name="Ikemoto K."/>
            <person name="Inada T."/>
            <person name="Itoh T."/>
            <person name="Kajihara M."/>
            <person name="Kanai K."/>
            <person name="Kashimoto K."/>
            <person name="Kimura S."/>
            <person name="Kitagawa M."/>
            <person name="Makino K."/>
            <person name="Masuda S."/>
            <person name="Miki T."/>
            <person name="Mizobuchi K."/>
            <person name="Mori H."/>
            <person name="Motomura K."/>
            <person name="Nakamura Y."/>
            <person name="Nashimoto H."/>
            <person name="Nishio Y."/>
            <person name="Saito N."/>
            <person name="Sampei G."/>
            <person name="Seki Y."/>
            <person name="Tagami H."/>
            <person name="Takemoto K."/>
            <person name="Wada C."/>
            <person name="Yamamoto Y."/>
            <person name="Yano M."/>
            <person name="Horiuchi T."/>
        </authorList>
    </citation>
    <scope>NUCLEOTIDE SEQUENCE [LARGE SCALE GENOMIC DNA]</scope>
    <source>
        <strain>K12 / W3110 / ATCC 27325 / DSM 5911</strain>
    </source>
</reference>
<reference key="2">
    <citation type="journal article" date="1997" name="Science">
        <title>The complete genome sequence of Escherichia coli K-12.</title>
        <authorList>
            <person name="Blattner F.R."/>
            <person name="Plunkett G. III"/>
            <person name="Bloch C.A."/>
            <person name="Perna N.T."/>
            <person name="Burland V."/>
            <person name="Riley M."/>
            <person name="Collado-Vides J."/>
            <person name="Glasner J.D."/>
            <person name="Rode C.K."/>
            <person name="Mayhew G.F."/>
            <person name="Gregor J."/>
            <person name="Davis N.W."/>
            <person name="Kirkpatrick H.A."/>
            <person name="Goeden M.A."/>
            <person name="Rose D.J."/>
            <person name="Mau B."/>
            <person name="Shao Y."/>
        </authorList>
    </citation>
    <scope>NUCLEOTIDE SEQUENCE [LARGE SCALE GENOMIC DNA]</scope>
    <source>
        <strain>K12 / MG1655 / ATCC 47076</strain>
    </source>
</reference>
<reference key="3">
    <citation type="journal article" date="2006" name="Mol. Syst. Biol.">
        <title>Highly accurate genome sequences of Escherichia coli K-12 strains MG1655 and W3110.</title>
        <authorList>
            <person name="Hayashi K."/>
            <person name="Morooka N."/>
            <person name="Yamamoto Y."/>
            <person name="Fujita K."/>
            <person name="Isono K."/>
            <person name="Choi S."/>
            <person name="Ohtsubo E."/>
            <person name="Baba T."/>
            <person name="Wanner B.L."/>
            <person name="Mori H."/>
            <person name="Horiuchi T."/>
        </authorList>
    </citation>
    <scope>NUCLEOTIDE SEQUENCE [LARGE SCALE GENOMIC DNA]</scope>
    <source>
        <strain>K12 / W3110 / ATCC 27325 / DSM 5911</strain>
    </source>
</reference>
<reference key="4">
    <citation type="journal article" date="2005" name="EMBO J.">
        <title>Escherichia coli dihydroxyacetone kinase controls gene expression by binding to transcription factor DhaR.</title>
        <authorList>
            <person name="Baechler C."/>
            <person name="Schneider P."/>
            <person name="Baehler P."/>
            <person name="Lustig A."/>
            <person name="Erni B."/>
        </authorList>
    </citation>
    <scope>FUNCTION</scope>
</reference>
<reference key="5">
    <citation type="journal article" date="2014" name="Structure">
        <title>Coiled-coil helix rotation selects repressing or activating state of transcriptional regulator DhaR.</title>
        <authorList>
            <person name="Shi R."/>
            <person name="McDonald L."/>
            <person name="Cygler M."/>
            <person name="Ekiel I."/>
        </authorList>
    </citation>
    <scope>X-RAY CRYSTALLOGRAPHY (2.32 ANGSTROMS) OF 1-318 IN COMPLEXES WITH DHAL AND DHAK</scope>
    <scope>FUNCTION</scope>
    <scope>INDUCTION</scope>
    <scope>SUBUNIT</scope>
</reference>
<dbReference type="EMBL" id="U00096">
    <property type="protein sequence ID" value="AAC74285.2"/>
    <property type="molecule type" value="Genomic_DNA"/>
</dbReference>
<dbReference type="EMBL" id="AP009048">
    <property type="protein sequence ID" value="BAA36058.2"/>
    <property type="molecule type" value="Genomic_DNA"/>
</dbReference>
<dbReference type="PIR" id="F64866">
    <property type="entry name" value="F64866"/>
</dbReference>
<dbReference type="RefSeq" id="NP_415719.2">
    <property type="nucleotide sequence ID" value="NC_000913.3"/>
</dbReference>
<dbReference type="RefSeq" id="WP_001350505.1">
    <property type="nucleotide sequence ID" value="NZ_SSZK01000010.1"/>
</dbReference>
<dbReference type="PDB" id="4LRX">
    <property type="method" value="X-ray"/>
    <property type="resolution" value="3.25 A"/>
    <property type="chains" value="C/D=1-318"/>
</dbReference>
<dbReference type="PDB" id="4LRY">
    <property type="method" value="X-ray"/>
    <property type="resolution" value="2.83 A"/>
    <property type="chains" value="C/D=1-318"/>
</dbReference>
<dbReference type="PDB" id="4LRZ">
    <property type="method" value="X-ray"/>
    <property type="resolution" value="2.32 A"/>
    <property type="chains" value="E/F/G/H=1-318"/>
</dbReference>
<dbReference type="PDBsum" id="4LRX"/>
<dbReference type="PDBsum" id="4LRY"/>
<dbReference type="PDBsum" id="4LRZ"/>
<dbReference type="SMR" id="P76016"/>
<dbReference type="BioGRID" id="4261628">
    <property type="interactions" value="155"/>
</dbReference>
<dbReference type="BioGRID" id="850110">
    <property type="interactions" value="1"/>
</dbReference>
<dbReference type="DIP" id="DIP-9438N"/>
<dbReference type="FunCoup" id="P76016">
    <property type="interactions" value="6"/>
</dbReference>
<dbReference type="IntAct" id="P76016">
    <property type="interactions" value="2"/>
</dbReference>
<dbReference type="STRING" id="511145.b1201"/>
<dbReference type="PaxDb" id="511145-b1201"/>
<dbReference type="EnsemblBacteria" id="AAC74285">
    <property type="protein sequence ID" value="AAC74285"/>
    <property type="gene ID" value="b1201"/>
</dbReference>
<dbReference type="GeneID" id="945743"/>
<dbReference type="KEGG" id="ecj:JW5188"/>
<dbReference type="KEGG" id="eco:b1201"/>
<dbReference type="KEGG" id="ecoc:C3026_07060"/>
<dbReference type="PATRIC" id="fig|1411691.4.peg.1084"/>
<dbReference type="EchoBASE" id="EB3661"/>
<dbReference type="eggNOG" id="COG3284">
    <property type="taxonomic scope" value="Bacteria"/>
</dbReference>
<dbReference type="HOGENOM" id="CLU_000445_8_12_6"/>
<dbReference type="InParanoid" id="P76016"/>
<dbReference type="OMA" id="HVEVTFE"/>
<dbReference type="OrthoDB" id="9804019at2"/>
<dbReference type="PhylomeDB" id="P76016"/>
<dbReference type="BioCyc" id="EcoCyc:G6628-MONOMER"/>
<dbReference type="EvolutionaryTrace" id="P76016"/>
<dbReference type="PRO" id="PR:P76016"/>
<dbReference type="Proteomes" id="UP000000625">
    <property type="component" value="Chromosome"/>
</dbReference>
<dbReference type="GO" id="GO:0032993">
    <property type="term" value="C:protein-DNA complex"/>
    <property type="evidence" value="ECO:0000318"/>
    <property type="project" value="GO_Central"/>
</dbReference>
<dbReference type="GO" id="GO:0005524">
    <property type="term" value="F:ATP binding"/>
    <property type="evidence" value="ECO:0007669"/>
    <property type="project" value="UniProtKB-KW"/>
</dbReference>
<dbReference type="GO" id="GO:0016887">
    <property type="term" value="F:ATP hydrolysis activity"/>
    <property type="evidence" value="ECO:0007669"/>
    <property type="project" value="InterPro"/>
</dbReference>
<dbReference type="GO" id="GO:0000987">
    <property type="term" value="F:cis-regulatory region sequence-specific DNA binding"/>
    <property type="evidence" value="ECO:0000318"/>
    <property type="project" value="GO_Central"/>
</dbReference>
<dbReference type="GO" id="GO:0001216">
    <property type="term" value="F:DNA-binding transcription activator activity"/>
    <property type="evidence" value="ECO:0000318"/>
    <property type="project" value="GO_Central"/>
</dbReference>
<dbReference type="GO" id="GO:0006351">
    <property type="term" value="P:DNA-templated transcription"/>
    <property type="evidence" value="ECO:0000315"/>
    <property type="project" value="EcoCyc"/>
</dbReference>
<dbReference type="GO" id="GO:0006071">
    <property type="term" value="P:glycerol metabolic process"/>
    <property type="evidence" value="ECO:0007669"/>
    <property type="project" value="UniProtKB-KW"/>
</dbReference>
<dbReference type="GO" id="GO:0045893">
    <property type="term" value="P:positive regulation of DNA-templated transcription"/>
    <property type="evidence" value="ECO:0000318"/>
    <property type="project" value="GO_Central"/>
</dbReference>
<dbReference type="GO" id="GO:0006355">
    <property type="term" value="P:regulation of DNA-templated transcription"/>
    <property type="evidence" value="ECO:0000315"/>
    <property type="project" value="EcoCyc"/>
</dbReference>
<dbReference type="CDD" id="cd00009">
    <property type="entry name" value="AAA"/>
    <property type="match status" value="1"/>
</dbReference>
<dbReference type="CDD" id="cd00130">
    <property type="entry name" value="PAS"/>
    <property type="match status" value="1"/>
</dbReference>
<dbReference type="Gene3D" id="1.10.8.60">
    <property type="match status" value="1"/>
</dbReference>
<dbReference type="Gene3D" id="3.30.450.40">
    <property type="match status" value="1"/>
</dbReference>
<dbReference type="Gene3D" id="1.10.10.60">
    <property type="entry name" value="Homeodomain-like"/>
    <property type="match status" value="1"/>
</dbReference>
<dbReference type="Gene3D" id="3.40.50.300">
    <property type="entry name" value="P-loop containing nucleotide triphosphate hydrolases"/>
    <property type="match status" value="1"/>
</dbReference>
<dbReference type="Gene3D" id="3.30.450.20">
    <property type="entry name" value="PAS domain"/>
    <property type="match status" value="1"/>
</dbReference>
<dbReference type="InterPro" id="IPR003593">
    <property type="entry name" value="AAA+_ATPase"/>
</dbReference>
<dbReference type="InterPro" id="IPR003018">
    <property type="entry name" value="GAF"/>
</dbReference>
<dbReference type="InterPro" id="IPR029016">
    <property type="entry name" value="GAF-like_dom_sf"/>
</dbReference>
<dbReference type="InterPro" id="IPR009057">
    <property type="entry name" value="Homeodomain-like_sf"/>
</dbReference>
<dbReference type="InterPro" id="IPR002197">
    <property type="entry name" value="HTH_Fis"/>
</dbReference>
<dbReference type="InterPro" id="IPR027417">
    <property type="entry name" value="P-loop_NTPase"/>
</dbReference>
<dbReference type="InterPro" id="IPR000014">
    <property type="entry name" value="PAS"/>
</dbReference>
<dbReference type="InterPro" id="IPR035965">
    <property type="entry name" value="PAS-like_dom_sf"/>
</dbReference>
<dbReference type="InterPro" id="IPR013767">
    <property type="entry name" value="PAS_fold"/>
</dbReference>
<dbReference type="InterPro" id="IPR002078">
    <property type="entry name" value="Sigma_54_int"/>
</dbReference>
<dbReference type="InterPro" id="IPR025662">
    <property type="entry name" value="Sigma_54_int_dom_ATP-bd_1"/>
</dbReference>
<dbReference type="InterPro" id="IPR025943">
    <property type="entry name" value="Sigma_54_int_dom_ATP-bd_2"/>
</dbReference>
<dbReference type="NCBIfam" id="NF008485">
    <property type="entry name" value="PRK11388.1"/>
    <property type="match status" value="1"/>
</dbReference>
<dbReference type="PANTHER" id="PTHR32071:SF117">
    <property type="entry name" value="PTS-DEPENDENT DIHYDROXYACETONE KINASE OPERON REGULATORY PROTEIN-RELATED"/>
    <property type="match status" value="1"/>
</dbReference>
<dbReference type="PANTHER" id="PTHR32071">
    <property type="entry name" value="TRANSCRIPTIONAL REGULATORY PROTEIN"/>
    <property type="match status" value="1"/>
</dbReference>
<dbReference type="Pfam" id="PF01590">
    <property type="entry name" value="GAF"/>
    <property type="match status" value="1"/>
</dbReference>
<dbReference type="Pfam" id="PF02954">
    <property type="entry name" value="HTH_8"/>
    <property type="match status" value="1"/>
</dbReference>
<dbReference type="Pfam" id="PF00989">
    <property type="entry name" value="PAS"/>
    <property type="match status" value="1"/>
</dbReference>
<dbReference type="Pfam" id="PF00158">
    <property type="entry name" value="Sigma54_activat"/>
    <property type="match status" value="1"/>
</dbReference>
<dbReference type="SMART" id="SM00382">
    <property type="entry name" value="AAA"/>
    <property type="match status" value="1"/>
</dbReference>
<dbReference type="SMART" id="SM00091">
    <property type="entry name" value="PAS"/>
    <property type="match status" value="1"/>
</dbReference>
<dbReference type="SUPFAM" id="SSF46689">
    <property type="entry name" value="Homeodomain-like"/>
    <property type="match status" value="1"/>
</dbReference>
<dbReference type="SUPFAM" id="SSF52540">
    <property type="entry name" value="P-loop containing nucleoside triphosphate hydrolases"/>
    <property type="match status" value="1"/>
</dbReference>
<dbReference type="SUPFAM" id="SSF55785">
    <property type="entry name" value="PYP-like sensor domain (PAS domain)"/>
    <property type="match status" value="1"/>
</dbReference>
<dbReference type="PROSITE" id="PS00675">
    <property type="entry name" value="SIGMA54_INTERACT_1"/>
    <property type="match status" value="1"/>
</dbReference>
<dbReference type="PROSITE" id="PS00676">
    <property type="entry name" value="SIGMA54_INTERACT_2"/>
    <property type="match status" value="1"/>
</dbReference>
<dbReference type="PROSITE" id="PS50045">
    <property type="entry name" value="SIGMA54_INTERACT_4"/>
    <property type="match status" value="1"/>
</dbReference>
<evidence type="ECO:0000255" key="1">
    <source>
        <dbReference type="PROSITE-ProRule" id="PRU00193"/>
    </source>
</evidence>
<evidence type="ECO:0000269" key="2">
    <source>
    </source>
</evidence>
<evidence type="ECO:0000269" key="3">
    <source>
    </source>
</evidence>
<evidence type="ECO:0000303" key="4">
    <source>
    </source>
</evidence>
<evidence type="ECO:0000305" key="5">
    <source>
    </source>
</evidence>
<evidence type="ECO:0007829" key="6">
    <source>
        <dbReference type="PDB" id="4LRY"/>
    </source>
</evidence>
<evidence type="ECO:0007829" key="7">
    <source>
        <dbReference type="PDB" id="4LRZ"/>
    </source>
</evidence>
<name>DHAR_ECOLI</name>